<accession>Q7KTX8</accession>
<accession>Q95RI1</accession>
<feature type="chain" id="PRO_0000314242" description="Mediator of RNA polymerase II transcription subunit 13">
    <location>
        <begin position="1"/>
        <end position="2618"/>
    </location>
</feature>
<feature type="region of interest" description="Disordered" evidence="2">
    <location>
        <begin position="232"/>
        <end position="279"/>
    </location>
</feature>
<feature type="region of interest" description="Disordered" evidence="2">
    <location>
        <begin position="509"/>
        <end position="543"/>
    </location>
</feature>
<feature type="region of interest" description="Disordered" evidence="2">
    <location>
        <begin position="569"/>
        <end position="731"/>
    </location>
</feature>
<feature type="region of interest" description="Disordered" evidence="2">
    <location>
        <begin position="916"/>
        <end position="957"/>
    </location>
</feature>
<feature type="region of interest" description="Disordered" evidence="2">
    <location>
        <begin position="970"/>
        <end position="995"/>
    </location>
</feature>
<feature type="region of interest" description="Disordered" evidence="2">
    <location>
        <begin position="1036"/>
        <end position="1055"/>
    </location>
</feature>
<feature type="region of interest" description="Disordered" evidence="2">
    <location>
        <begin position="1268"/>
        <end position="1384"/>
    </location>
</feature>
<feature type="region of interest" description="Disordered" evidence="2">
    <location>
        <begin position="1521"/>
        <end position="1557"/>
    </location>
</feature>
<feature type="region of interest" description="Disordered" evidence="2">
    <location>
        <begin position="1614"/>
        <end position="1633"/>
    </location>
</feature>
<feature type="region of interest" description="Disordered" evidence="2">
    <location>
        <begin position="1985"/>
        <end position="2060"/>
    </location>
</feature>
<feature type="compositionally biased region" description="Low complexity" evidence="2">
    <location>
        <begin position="232"/>
        <end position="255"/>
    </location>
</feature>
<feature type="compositionally biased region" description="Low complexity" evidence="2">
    <location>
        <begin position="509"/>
        <end position="519"/>
    </location>
</feature>
<feature type="compositionally biased region" description="Low complexity" evidence="2">
    <location>
        <begin position="532"/>
        <end position="543"/>
    </location>
</feature>
<feature type="compositionally biased region" description="Polar residues" evidence="2">
    <location>
        <begin position="581"/>
        <end position="590"/>
    </location>
</feature>
<feature type="compositionally biased region" description="Polar residues" evidence="2">
    <location>
        <begin position="634"/>
        <end position="643"/>
    </location>
</feature>
<feature type="compositionally biased region" description="Polar residues" evidence="2">
    <location>
        <begin position="669"/>
        <end position="681"/>
    </location>
</feature>
<feature type="compositionally biased region" description="Gly residues" evidence="2">
    <location>
        <begin position="692"/>
        <end position="706"/>
    </location>
</feature>
<feature type="compositionally biased region" description="Low complexity" evidence="2">
    <location>
        <begin position="711"/>
        <end position="723"/>
    </location>
</feature>
<feature type="compositionally biased region" description="Gly residues" evidence="2">
    <location>
        <begin position="939"/>
        <end position="949"/>
    </location>
</feature>
<feature type="compositionally biased region" description="Polar residues" evidence="2">
    <location>
        <begin position="1272"/>
        <end position="1295"/>
    </location>
</feature>
<feature type="compositionally biased region" description="Gly residues" evidence="2">
    <location>
        <begin position="1375"/>
        <end position="1384"/>
    </location>
</feature>
<feature type="compositionally biased region" description="Gly residues" evidence="2">
    <location>
        <begin position="1528"/>
        <end position="1538"/>
    </location>
</feature>
<feature type="compositionally biased region" description="Low complexity" evidence="2">
    <location>
        <begin position="1539"/>
        <end position="1553"/>
    </location>
</feature>
<feature type="compositionally biased region" description="Polar residues" evidence="2">
    <location>
        <begin position="1614"/>
        <end position="1629"/>
    </location>
</feature>
<feature type="compositionally biased region" description="Low complexity" evidence="2">
    <location>
        <begin position="1993"/>
        <end position="2014"/>
    </location>
</feature>
<feature type="modified residue" description="Phosphothreonine" evidence="8">
    <location>
        <position position="571"/>
    </location>
</feature>
<feature type="modified residue" description="Phosphothreonine" evidence="8">
    <location>
        <position position="575"/>
    </location>
</feature>
<feature type="modified residue" description="Phosphoserine" evidence="8">
    <location>
        <position position="2472"/>
    </location>
</feature>
<feature type="modified residue" description="Phosphoserine" evidence="8">
    <location>
        <position position="2475"/>
    </location>
</feature>
<organism>
    <name type="scientific">Drosophila melanogaster</name>
    <name type="common">Fruit fly</name>
    <dbReference type="NCBI Taxonomy" id="7227"/>
    <lineage>
        <taxon>Eukaryota</taxon>
        <taxon>Metazoa</taxon>
        <taxon>Ecdysozoa</taxon>
        <taxon>Arthropoda</taxon>
        <taxon>Hexapoda</taxon>
        <taxon>Insecta</taxon>
        <taxon>Pterygota</taxon>
        <taxon>Neoptera</taxon>
        <taxon>Endopterygota</taxon>
        <taxon>Diptera</taxon>
        <taxon>Brachycera</taxon>
        <taxon>Muscomorpha</taxon>
        <taxon>Ephydroidea</taxon>
        <taxon>Drosophilidae</taxon>
        <taxon>Drosophila</taxon>
        <taxon>Sophophora</taxon>
    </lineage>
</organism>
<sequence>MTHQNHQTNGASLEDCHTNFYALTDLCGIKWRKFVNGERPNASSDPLADPILRSYSRCIQADMLCVWRRVQSTKTDHADPNALTFEMTTSTKVHPPLSLAAAKELWIFWYGEEPDLSELVDAELLRVAANQALWNGTWKGALTYECRSLLFKALHNLMERFVLTKDIVRFGKWFVQPCTSSDRLFGRSSQHLSFSFTFFVHGDTVCASIDLREHPAVRPLTKEHLTEAAAAFAAASSPPGSNGSAASAGGAVPNPGQDPNGASMDGLDGGEGAAKAAPPPHARKVMLAPFGIAGILTGNSYKASDPIAEKILEDWASFFPLCNKDNTDVPPVVEVVSGGHKMYHPTNYVLVTDLDDMEHMEFVEMQKMQSSVAGAAAESAVLASLSCPPGAASAPSSMGAAPSATAVPLGPASLNAPALAGAGVGATASSAAKEISRKAAPQAVSALERLAFQPYYDQRPTSGFTFNTNNTHIPASAAVEMPERTWQDCVMNTLHVDAAAAAAAVASSTPASGTGSLSADGDENEQNKPPQDSKQLVQQQIQQQQQRQKLWNFVDPMQKAPCICTKHLGNTPHGTPHGGASTYSRNSLGGDSSMPVASVESPATPAPSPHPNSAHSQPTSVPPAEQLLNMSPHAPTSVSNLQQPPTPIDHLLDKNTPAPTPTDQHDSKSITASPYVHQTPSVEPPSYTDHAAGGGPAGGQGLGTGPGSVPAQQPATPTAATSAGGAGSGGPSNAIGANAVGTISVKKLEMQQQTPSAAMAIKQEPGAQGRGVGGVTSTTEALNNFKRLYNPPKLTLKDPDSFYDEEWLKEVIYDFQYQEYWDYSTVKRPKMEKQRRPRYAKNLYEGQNHVKPVMPSPGSVYGSQLLSLDESASQAGGRGGGGQAAGSSGGGLVGIANSTASGSDVEADGSSFFQGLNIKTEPGLHSPSCKETSKSSGGNSSGGGSGSGGNLFTAEGLNPSLNDLEQLFETSSNDECSSVQIHTPPDSNNPSNGGCSAVTNTIEDLKRSTAVASAAVAAAAAAAASGAGNIQAEDLTKMFPTPPSHEQQHPNSSPCQTDVVMTDLSVDTTTTIITSSITTTCNTTITSSINTTTTACSNPSNSIMLAAAQAPVTVVAIQTVSKMVKQEYNLELGSPMEEPINDWDYVYRPPQQEKFVGSTRYAPLTNLPSQTQPPLTLPTGCFYQPTWSSHKSRAATLAKAAAAQQQQHQKHQALQQRIQLHQQKLQQLQLQNQQQQQAAAAAAAAASGGVGHQKHQHQHLHDLLSAAPRTPLTPSTVPQPLSSGGSQYLLNQLNCPQAPPGASMQQLMHRAGMSPISPGPGMGPYAARSSPMSRATPTHPPPPYPYDLAVASPATSTSSYLNRPLHSQEHPHMHGLGGGATGVVGHGTGGGGHMGMVAYTGDAGIVSGGTAMAAGSSSLLQELPEVNSVLVNILLYDTALNVFRDHNFDSSSVCVCNADTQKIGNIRGADSGVYVPLPGVSFNPFPSGAGGALAGQRMLNGPSSAGFGGMRMISAFGGSPASASMPGAGSGHGHGPNGGSNSSSCTPPSSNPHITGYVDDDPVECTCGFSAVVNRRLSHRAGLFYEDEVEITGIADDPGRNKQPTLLSIIQSLSRKNQNKQGPGETSSALDKIGAGGLPNGQLEQLGHAVFDLLLDQCSIIQTSSSSVHRALQSHRRRMSRQRRIFGNNGAPTASLASIANVLEFMDAHDVISLALEQSRLAFENQRMDNMMDFHGNGSSSSHQQQQLTAFHAPPPALRHKLAGIGAGRLTVHKWPYLPVGFTRSNKEIVRTMNAIQPMLQNAFHCKSRGGSGSKDASSYNTVSGPLTWRQFHRLAGRASGQCEPQPIPSVVVGYEKDWISVAPHSIHYWDKFLLEPYSYARDVVYVVVCPDNEHVVNCTRSYFRELSSTYEMCKLGKHTPIRGWDGFLQVGAARNNVPADRETTPLDDWLRTLEHAALAEQIRRYAVAFIHQLAPYLSRVPNDKTLLNPPDGSGNSHSKGGSSCSSNSSSVSGLPGGDLPTDNIKLEPGTEPQVQPMETNEIKQEPGVGKGGTAAGETKPTLILGDPLGMGETLEDINPSAIVLYVVNPFTFASDSCELERLALIALLRCYAELLKAVPDSVRSQMNIQIISLESVMELGPCGNRKRFSDEIRCLALNIFSQCRRHLVHAQSVKSLTGFGTAANMEAFLKTKDEPNRRAYKMYTAPFVLAPMHERNDKTDFSRSAGSMHGQNEHRYSVMYCNYCLSEDQAWLLATATDERGEMLEKICINIDVPNRARRRKAPARYVALKKLMDFIMGIISQTSQMWRLVIGRIGRIGHSELKSWSFLLSKQQLQKASKQFKDMCKQCTLMYPPTILSACLVTLEPDAKLRVMPDQFTPDERFSQISMQNPLATPQDVTCTHILVFPTSAVCAPFTRQFQNEPQVDDDFLTFEEEGNEDFSDADIGDLFWDTHMDRVSNHGSPGRMDDNRSWQSAGGNNFKCTPPQEVEEVGSLNQQPISVGYMVSTAPTGRMPAWFWSACPHLEDVCPVFLKTALHLHVPSIQSADDILNSTNAHQSGNDHPLDSNLTADVLRFVLEGYNALSWLALDSNTHDRLSCLPINVQTLMDLYYLTAAIA</sequence>
<reference key="1">
    <citation type="journal article" date="2000" name="Genes Dev.">
        <title>Drosophila homologs of transcriptional mediator complex subunits are required for adult cell and segment identity specification.</title>
        <authorList>
            <person name="Boube M."/>
            <person name="Faucher C."/>
            <person name="Joulia L."/>
            <person name="Cribbs D.L."/>
            <person name="Bourbon H.-M."/>
        </authorList>
    </citation>
    <scope>NUCLEOTIDE SEQUENCE [GENOMIC DNA / MRNA]</scope>
    <scope>FUNCTION</scope>
    <scope>SUBCELLULAR LOCATION</scope>
    <scope>DEVELOPMENTAL STAGE</scope>
</reference>
<reference key="2">
    <citation type="journal article" date="2001" name="Development">
        <title>Drosophila homologues of the transcriptional coactivation complex subunits TRAP240 and TRAP230 are required for identical processes in eye-antennal disc development.</title>
        <authorList>
            <person name="Treisman J.E."/>
        </authorList>
    </citation>
    <scope>NUCLEOTIDE SEQUENCE [MRNA]</scope>
    <scope>FUNCTION</scope>
</reference>
<reference key="3">
    <citation type="submission" date="2000-01" db="EMBL/GenBank/DDBJ databases">
        <title>Isolation of flytrap (pap), the Drosophila TRAP240 homologue.</title>
        <authorList>
            <person name="Nairz K."/>
            <person name="Hafen E."/>
        </authorList>
    </citation>
    <scope>NUCLEOTIDE SEQUENCE [MRNA]</scope>
</reference>
<reference key="4">
    <citation type="journal article" date="2000" name="Science">
        <title>The genome sequence of Drosophila melanogaster.</title>
        <authorList>
            <person name="Adams M.D."/>
            <person name="Celniker S.E."/>
            <person name="Holt R.A."/>
            <person name="Evans C.A."/>
            <person name="Gocayne J.D."/>
            <person name="Amanatides P.G."/>
            <person name="Scherer S.E."/>
            <person name="Li P.W."/>
            <person name="Hoskins R.A."/>
            <person name="Galle R.F."/>
            <person name="George R.A."/>
            <person name="Lewis S.E."/>
            <person name="Richards S."/>
            <person name="Ashburner M."/>
            <person name="Henderson S.N."/>
            <person name="Sutton G.G."/>
            <person name="Wortman J.R."/>
            <person name="Yandell M.D."/>
            <person name="Zhang Q."/>
            <person name="Chen L.X."/>
            <person name="Brandon R.C."/>
            <person name="Rogers Y.-H.C."/>
            <person name="Blazej R.G."/>
            <person name="Champe M."/>
            <person name="Pfeiffer B.D."/>
            <person name="Wan K.H."/>
            <person name="Doyle C."/>
            <person name="Baxter E.G."/>
            <person name="Helt G."/>
            <person name="Nelson C.R."/>
            <person name="Miklos G.L.G."/>
            <person name="Abril J.F."/>
            <person name="Agbayani A."/>
            <person name="An H.-J."/>
            <person name="Andrews-Pfannkoch C."/>
            <person name="Baldwin D."/>
            <person name="Ballew R.M."/>
            <person name="Basu A."/>
            <person name="Baxendale J."/>
            <person name="Bayraktaroglu L."/>
            <person name="Beasley E.M."/>
            <person name="Beeson K.Y."/>
            <person name="Benos P.V."/>
            <person name="Berman B.P."/>
            <person name="Bhandari D."/>
            <person name="Bolshakov S."/>
            <person name="Borkova D."/>
            <person name="Botchan M.R."/>
            <person name="Bouck J."/>
            <person name="Brokstein P."/>
            <person name="Brottier P."/>
            <person name="Burtis K.C."/>
            <person name="Busam D.A."/>
            <person name="Butler H."/>
            <person name="Cadieu E."/>
            <person name="Center A."/>
            <person name="Chandra I."/>
            <person name="Cherry J.M."/>
            <person name="Cawley S."/>
            <person name="Dahlke C."/>
            <person name="Davenport L.B."/>
            <person name="Davies P."/>
            <person name="de Pablos B."/>
            <person name="Delcher A."/>
            <person name="Deng Z."/>
            <person name="Mays A.D."/>
            <person name="Dew I."/>
            <person name="Dietz S.M."/>
            <person name="Dodson K."/>
            <person name="Doup L.E."/>
            <person name="Downes M."/>
            <person name="Dugan-Rocha S."/>
            <person name="Dunkov B.C."/>
            <person name="Dunn P."/>
            <person name="Durbin K.J."/>
            <person name="Evangelista C.C."/>
            <person name="Ferraz C."/>
            <person name="Ferriera S."/>
            <person name="Fleischmann W."/>
            <person name="Fosler C."/>
            <person name="Gabrielian A.E."/>
            <person name="Garg N.S."/>
            <person name="Gelbart W.M."/>
            <person name="Glasser K."/>
            <person name="Glodek A."/>
            <person name="Gong F."/>
            <person name="Gorrell J.H."/>
            <person name="Gu Z."/>
            <person name="Guan P."/>
            <person name="Harris M."/>
            <person name="Harris N.L."/>
            <person name="Harvey D.A."/>
            <person name="Heiman T.J."/>
            <person name="Hernandez J.R."/>
            <person name="Houck J."/>
            <person name="Hostin D."/>
            <person name="Houston K.A."/>
            <person name="Howland T.J."/>
            <person name="Wei M.-H."/>
            <person name="Ibegwam C."/>
            <person name="Jalali M."/>
            <person name="Kalush F."/>
            <person name="Karpen G.H."/>
            <person name="Ke Z."/>
            <person name="Kennison J.A."/>
            <person name="Ketchum K.A."/>
            <person name="Kimmel B.E."/>
            <person name="Kodira C.D."/>
            <person name="Kraft C.L."/>
            <person name="Kravitz S."/>
            <person name="Kulp D."/>
            <person name="Lai Z."/>
            <person name="Lasko P."/>
            <person name="Lei Y."/>
            <person name="Levitsky A.A."/>
            <person name="Li J.H."/>
            <person name="Li Z."/>
            <person name="Liang Y."/>
            <person name="Lin X."/>
            <person name="Liu X."/>
            <person name="Mattei B."/>
            <person name="McIntosh T.C."/>
            <person name="McLeod M.P."/>
            <person name="McPherson D."/>
            <person name="Merkulov G."/>
            <person name="Milshina N.V."/>
            <person name="Mobarry C."/>
            <person name="Morris J."/>
            <person name="Moshrefi A."/>
            <person name="Mount S.M."/>
            <person name="Moy M."/>
            <person name="Murphy B."/>
            <person name="Murphy L."/>
            <person name="Muzny D.M."/>
            <person name="Nelson D.L."/>
            <person name="Nelson D.R."/>
            <person name="Nelson K.A."/>
            <person name="Nixon K."/>
            <person name="Nusskern D.R."/>
            <person name="Pacleb J.M."/>
            <person name="Palazzolo M."/>
            <person name="Pittman G.S."/>
            <person name="Pan S."/>
            <person name="Pollard J."/>
            <person name="Puri V."/>
            <person name="Reese M.G."/>
            <person name="Reinert K."/>
            <person name="Remington K."/>
            <person name="Saunders R.D.C."/>
            <person name="Scheeler F."/>
            <person name="Shen H."/>
            <person name="Shue B.C."/>
            <person name="Siden-Kiamos I."/>
            <person name="Simpson M."/>
            <person name="Skupski M.P."/>
            <person name="Smith T.J."/>
            <person name="Spier E."/>
            <person name="Spradling A.C."/>
            <person name="Stapleton M."/>
            <person name="Strong R."/>
            <person name="Sun E."/>
            <person name="Svirskas R."/>
            <person name="Tector C."/>
            <person name="Turner R."/>
            <person name="Venter E."/>
            <person name="Wang A.H."/>
            <person name="Wang X."/>
            <person name="Wang Z.-Y."/>
            <person name="Wassarman D.A."/>
            <person name="Weinstock G.M."/>
            <person name="Weissenbach J."/>
            <person name="Williams S.M."/>
            <person name="Woodage T."/>
            <person name="Worley K.C."/>
            <person name="Wu D."/>
            <person name="Yang S."/>
            <person name="Yao Q.A."/>
            <person name="Ye J."/>
            <person name="Yeh R.-F."/>
            <person name="Zaveri J.S."/>
            <person name="Zhan M."/>
            <person name="Zhang G."/>
            <person name="Zhao Q."/>
            <person name="Zheng L."/>
            <person name="Zheng X.H."/>
            <person name="Zhong F.N."/>
            <person name="Zhong W."/>
            <person name="Zhou X."/>
            <person name="Zhu S.C."/>
            <person name="Zhu X."/>
            <person name="Smith H.O."/>
            <person name="Gibbs R.A."/>
            <person name="Myers E.W."/>
            <person name="Rubin G.M."/>
            <person name="Venter J.C."/>
        </authorList>
    </citation>
    <scope>NUCLEOTIDE SEQUENCE [LARGE SCALE GENOMIC DNA]</scope>
    <source>
        <strain>Berkeley</strain>
    </source>
</reference>
<reference key="5">
    <citation type="journal article" date="2002" name="Genome Biol.">
        <title>Annotation of the Drosophila melanogaster euchromatic genome: a systematic review.</title>
        <authorList>
            <person name="Misra S."/>
            <person name="Crosby M.A."/>
            <person name="Mungall C.J."/>
            <person name="Matthews B.B."/>
            <person name="Campbell K.S."/>
            <person name="Hradecky P."/>
            <person name="Huang Y."/>
            <person name="Kaminker J.S."/>
            <person name="Millburn G.H."/>
            <person name="Prochnik S.E."/>
            <person name="Smith C.D."/>
            <person name="Tupy J.L."/>
            <person name="Whitfield E.J."/>
            <person name="Bayraktaroglu L."/>
            <person name="Berman B.P."/>
            <person name="Bettencourt B.R."/>
            <person name="Celniker S.E."/>
            <person name="de Grey A.D.N.J."/>
            <person name="Drysdale R.A."/>
            <person name="Harris N.L."/>
            <person name="Richter J."/>
            <person name="Russo S."/>
            <person name="Schroeder A.J."/>
            <person name="Shu S.Q."/>
            <person name="Stapleton M."/>
            <person name="Yamada C."/>
            <person name="Ashburner M."/>
            <person name="Gelbart W.M."/>
            <person name="Rubin G.M."/>
            <person name="Lewis S.E."/>
        </authorList>
    </citation>
    <scope>GENOME REANNOTATION</scope>
    <source>
        <strain>Berkeley</strain>
    </source>
</reference>
<reference key="6">
    <citation type="journal article" date="2002" name="Genome Biol.">
        <title>A Drosophila full-length cDNA resource.</title>
        <authorList>
            <person name="Stapleton M."/>
            <person name="Carlson J.W."/>
            <person name="Brokstein P."/>
            <person name="Yu C."/>
            <person name="Champe M."/>
            <person name="George R.A."/>
            <person name="Guarin H."/>
            <person name="Kronmiller B."/>
            <person name="Pacleb J.M."/>
            <person name="Park S."/>
            <person name="Wan K.H."/>
            <person name="Rubin G.M."/>
            <person name="Celniker S.E."/>
        </authorList>
    </citation>
    <scope>NUCLEOTIDE SEQUENCE [LARGE SCALE MRNA] OF 1556-2618</scope>
    <source>
        <strain>Berkeley</strain>
        <tissue>Embryo</tissue>
    </source>
</reference>
<reference key="7">
    <citation type="journal article" date="2003" name="Development">
        <title>Two subunits of the Drosophila mediator complex act together to control cell affinity.</title>
        <authorList>
            <person name="Janody F."/>
            <person name="Martirosyan Z."/>
            <person name="Benlali A."/>
            <person name="Treisman J.E."/>
        </authorList>
    </citation>
    <scope>FUNCTION</scope>
    <scope>INTERACTION WITH KTO</scope>
    <scope>SUBCELLULAR LOCATION</scope>
</reference>
<reference key="8">
    <citation type="journal article" date="2006" name="Genes Dev.">
        <title>Coactivator cross-talk specifies transcriptional output.</title>
        <authorList>
            <person name="Marr M.T. II"/>
            <person name="Isogai Y."/>
            <person name="Wright K.J."/>
            <person name="Tjian R."/>
        </authorList>
    </citation>
    <scope>FUNCTION</scope>
</reference>
<reference key="9">
    <citation type="journal article" date="2007" name="EMBO J.">
        <title>Distinct roles for Mediator Cdk8 module subunits in Drosophila development.</title>
        <authorList>
            <person name="Loncle N."/>
            <person name="Boube M."/>
            <person name="Joulia L."/>
            <person name="Boschiero C."/>
            <person name="Werner M."/>
            <person name="Cribbs D.L."/>
            <person name="Bourbon H.-M."/>
        </authorList>
    </citation>
    <scope>FUNCTION</scope>
    <scope>INTERACTION WITH CYCC; CDK8 AND KTO</scope>
</reference>
<reference key="10">
    <citation type="journal article" date="2008" name="J. Proteome Res.">
        <title>Phosphoproteome analysis of Drosophila melanogaster embryos.</title>
        <authorList>
            <person name="Zhai B."/>
            <person name="Villen J."/>
            <person name="Beausoleil S.A."/>
            <person name="Mintseris J."/>
            <person name="Gygi S.P."/>
        </authorList>
    </citation>
    <scope>PHOSPHORYLATION [LARGE SCALE ANALYSIS] AT THR-571; THR-575; SER-2472 AND SER-2475</scope>
    <scope>IDENTIFICATION BY MASS SPECTROMETRY</scope>
    <source>
        <tissue>Embryo</tissue>
    </source>
</reference>
<proteinExistence type="evidence at protein level"/>
<dbReference type="EMBL" id="AF227214">
    <property type="protein sequence ID" value="AAF43021.1"/>
    <property type="molecule type" value="mRNA"/>
</dbReference>
<dbReference type="EMBL" id="AF227215">
    <property type="protein sequence ID" value="AAF43172.1"/>
    <property type="molecule type" value="Genomic_DNA"/>
</dbReference>
<dbReference type="EMBL" id="AF324425">
    <property type="protein sequence ID" value="AAG48327.1"/>
    <property type="molecule type" value="mRNA"/>
</dbReference>
<dbReference type="EMBL" id="AF226855">
    <property type="protein sequence ID" value="AAF36691.1"/>
    <property type="molecule type" value="mRNA"/>
</dbReference>
<dbReference type="EMBL" id="AE014296">
    <property type="protein sequence ID" value="AAN12148.1"/>
    <property type="molecule type" value="Genomic_DNA"/>
</dbReference>
<dbReference type="EMBL" id="AE014296">
    <property type="protein sequence ID" value="AAN12149.1"/>
    <property type="molecule type" value="Genomic_DNA"/>
</dbReference>
<dbReference type="EMBL" id="AY061361">
    <property type="protein sequence ID" value="AAL28909.1"/>
    <property type="status" value="ALT_INIT"/>
    <property type="molecule type" value="mRNA"/>
</dbReference>
<dbReference type="RefSeq" id="NP_524653.1">
    <property type="nucleotide sequence ID" value="NM_079914.3"/>
</dbReference>
<dbReference type="RefSeq" id="NP_730590.1">
    <property type="nucleotide sequence ID" value="NM_168879.3"/>
</dbReference>
<dbReference type="BioGRID" id="68707">
    <property type="interactions" value="40"/>
</dbReference>
<dbReference type="ComplexPortal" id="CPX-7701">
    <property type="entry name" value="CKM complex"/>
</dbReference>
<dbReference type="DIP" id="DIP-29988N"/>
<dbReference type="FunCoup" id="Q7KTX8">
    <property type="interactions" value="1940"/>
</dbReference>
<dbReference type="IntAct" id="Q7KTX8">
    <property type="interactions" value="80"/>
</dbReference>
<dbReference type="MINT" id="Q7KTX8"/>
<dbReference type="STRING" id="7227.FBpp0111743"/>
<dbReference type="GlyGen" id="Q7KTX8">
    <property type="glycosylation" value="5 sites"/>
</dbReference>
<dbReference type="iPTMnet" id="Q7KTX8"/>
<dbReference type="PaxDb" id="7227-FBpp0111743"/>
<dbReference type="EnsemblMetazoa" id="FBtr0078328">
    <property type="protein sequence ID" value="FBpp0077984"/>
    <property type="gene ID" value="FBgn0003415"/>
</dbReference>
<dbReference type="EnsemblMetazoa" id="FBtr0078329">
    <property type="protein sequence ID" value="FBpp0077985"/>
    <property type="gene ID" value="FBgn0003415"/>
</dbReference>
<dbReference type="GeneID" id="43906"/>
<dbReference type="KEGG" id="dme:Dmel_CG9936"/>
<dbReference type="AGR" id="FB:FBgn0003415"/>
<dbReference type="CTD" id="43906"/>
<dbReference type="FlyBase" id="FBgn0003415">
    <property type="gene designation" value="skd"/>
</dbReference>
<dbReference type="VEuPathDB" id="VectorBase:FBgn0003415"/>
<dbReference type="eggNOG" id="KOG3600">
    <property type="taxonomic scope" value="Eukaryota"/>
</dbReference>
<dbReference type="GeneTree" id="ENSGT00390000013680"/>
<dbReference type="InParanoid" id="Q7KTX8"/>
<dbReference type="OrthoDB" id="103819at2759"/>
<dbReference type="Reactome" id="R-DME-9841922">
    <property type="pathway name" value="MLL4 and MLL3 complexes regulate expression of PPARG target genes in adipogenesis and hepatic steatosis"/>
</dbReference>
<dbReference type="SignaLink" id="Q7KTX8"/>
<dbReference type="BioGRID-ORCS" id="43906">
    <property type="hits" value="0 hits in 3 CRISPR screens"/>
</dbReference>
<dbReference type="ChiTaRS" id="skd">
    <property type="organism name" value="fly"/>
</dbReference>
<dbReference type="GenomeRNAi" id="43906"/>
<dbReference type="PRO" id="PR:Q7KTX8"/>
<dbReference type="Proteomes" id="UP000000803">
    <property type="component" value="Chromosome 3L"/>
</dbReference>
<dbReference type="Bgee" id="FBgn0003415">
    <property type="expression patterns" value="Expressed in spermatogonium in testis and 304 other cell types or tissues"/>
</dbReference>
<dbReference type="ExpressionAtlas" id="Q7KTX8">
    <property type="expression patterns" value="baseline and differential"/>
</dbReference>
<dbReference type="GO" id="GO:1990508">
    <property type="term" value="C:CKM complex"/>
    <property type="evidence" value="ECO:0000314"/>
    <property type="project" value="FlyBase"/>
</dbReference>
<dbReference type="GO" id="GO:0070847">
    <property type="term" value="C:core mediator complex"/>
    <property type="evidence" value="ECO:0000353"/>
    <property type="project" value="FlyBase"/>
</dbReference>
<dbReference type="GO" id="GO:0016592">
    <property type="term" value="C:mediator complex"/>
    <property type="evidence" value="ECO:0000314"/>
    <property type="project" value="UniProtKB"/>
</dbReference>
<dbReference type="GO" id="GO:0005654">
    <property type="term" value="C:nucleoplasm"/>
    <property type="evidence" value="ECO:0007005"/>
    <property type="project" value="FlyBase"/>
</dbReference>
<dbReference type="GO" id="GO:0005634">
    <property type="term" value="C:nucleus"/>
    <property type="evidence" value="ECO:0000314"/>
    <property type="project" value="FlyBase"/>
</dbReference>
<dbReference type="GO" id="GO:0003713">
    <property type="term" value="F:transcription coactivator activity"/>
    <property type="evidence" value="ECO:0000318"/>
    <property type="project" value="GO_Central"/>
</dbReference>
<dbReference type="GO" id="GO:0003712">
    <property type="term" value="F:transcription coregulator activity"/>
    <property type="evidence" value="ECO:0000314"/>
    <property type="project" value="UniProtKB"/>
</dbReference>
<dbReference type="GO" id="GO:0045165">
    <property type="term" value="P:cell fate commitment"/>
    <property type="evidence" value="ECO:0000316"/>
    <property type="project" value="FlyBase"/>
</dbReference>
<dbReference type="GO" id="GO:0022416">
    <property type="term" value="P:chaeta development"/>
    <property type="evidence" value="ECO:0000315"/>
    <property type="project" value="FlyBase"/>
</dbReference>
<dbReference type="GO" id="GO:0048749">
    <property type="term" value="P:compound eye development"/>
    <property type="evidence" value="ECO:0000315"/>
    <property type="project" value="FlyBase"/>
</dbReference>
<dbReference type="GO" id="GO:0036011">
    <property type="term" value="P:imaginal disc-derived leg segmentation"/>
    <property type="evidence" value="ECO:0000315"/>
    <property type="project" value="FlyBase"/>
</dbReference>
<dbReference type="GO" id="GO:0007526">
    <property type="term" value="P:larval somatic muscle development"/>
    <property type="evidence" value="ECO:0000315"/>
    <property type="project" value="FlyBase"/>
</dbReference>
<dbReference type="GO" id="GO:0090263">
    <property type="term" value="P:positive regulation of canonical Wnt signaling pathway"/>
    <property type="evidence" value="ECO:0000315"/>
    <property type="project" value="FlyBase"/>
</dbReference>
<dbReference type="GO" id="GO:0045944">
    <property type="term" value="P:positive regulation of transcription by RNA polymerase II"/>
    <property type="evidence" value="ECO:0000318"/>
    <property type="project" value="GO_Central"/>
</dbReference>
<dbReference type="GO" id="GO:0006357">
    <property type="term" value="P:regulation of transcription by RNA polymerase II"/>
    <property type="evidence" value="ECO:0000314"/>
    <property type="project" value="UniProtKB"/>
</dbReference>
<dbReference type="GO" id="GO:0045498">
    <property type="term" value="P:sex comb development"/>
    <property type="evidence" value="ECO:0000315"/>
    <property type="project" value="FlyBase"/>
</dbReference>
<dbReference type="GO" id="GO:0006367">
    <property type="term" value="P:transcription initiation at RNA polymerase II promoter"/>
    <property type="evidence" value="ECO:0000250"/>
    <property type="project" value="FlyBase"/>
</dbReference>
<dbReference type="GO" id="GO:0048190">
    <property type="term" value="P:wing disc dorsal/ventral pattern formation"/>
    <property type="evidence" value="ECO:0000316"/>
    <property type="project" value="FlyBase"/>
</dbReference>
<dbReference type="InterPro" id="IPR009401">
    <property type="entry name" value="Med13_C"/>
</dbReference>
<dbReference type="InterPro" id="IPR051139">
    <property type="entry name" value="Mediator_complx_sub13"/>
</dbReference>
<dbReference type="InterPro" id="IPR021643">
    <property type="entry name" value="Mediator_Med13_N"/>
</dbReference>
<dbReference type="InterPro" id="IPR041285">
    <property type="entry name" value="MID_MedPIWI"/>
</dbReference>
<dbReference type="PANTHER" id="PTHR48249">
    <property type="entry name" value="MEDIATOR OF RNA POLYMERASE II TRANSCRIPTION SUBUNIT 13"/>
    <property type="match status" value="1"/>
</dbReference>
<dbReference type="PANTHER" id="PTHR48249:SF3">
    <property type="entry name" value="MEDIATOR OF RNA POLYMERASE II TRANSCRIPTION SUBUNIT 13"/>
    <property type="match status" value="1"/>
</dbReference>
<dbReference type="Pfam" id="PF06333">
    <property type="entry name" value="Med13_C"/>
    <property type="match status" value="1"/>
</dbReference>
<dbReference type="Pfam" id="PF11597">
    <property type="entry name" value="Med13_N"/>
    <property type="match status" value="1"/>
</dbReference>
<dbReference type="Pfam" id="PF18296">
    <property type="entry name" value="MID_MedPIWI"/>
    <property type="match status" value="1"/>
</dbReference>
<keyword id="KW-0010">Activator</keyword>
<keyword id="KW-0217">Developmental protein</keyword>
<keyword id="KW-0539">Nucleus</keyword>
<keyword id="KW-0597">Phosphoprotein</keyword>
<keyword id="KW-1185">Reference proteome</keyword>
<keyword id="KW-0678">Repressor</keyword>
<keyword id="KW-0804">Transcription</keyword>
<keyword id="KW-0805">Transcription regulation</keyword>
<gene>
    <name type="primary">skd</name>
    <name type="synonym">bli</name>
    <name type="synonym">Med13</name>
    <name type="synonym">pap</name>
    <name type="synonym">Trap240</name>
    <name type="ORF">CG9936</name>
</gene>
<evidence type="ECO:0000250" key="1"/>
<evidence type="ECO:0000256" key="2">
    <source>
        <dbReference type="SAM" id="MobiDB-lite"/>
    </source>
</evidence>
<evidence type="ECO:0000269" key="3">
    <source>
    </source>
</evidence>
<evidence type="ECO:0000269" key="4">
    <source>
    </source>
</evidence>
<evidence type="ECO:0000269" key="5">
    <source>
    </source>
</evidence>
<evidence type="ECO:0000269" key="6">
    <source>
    </source>
</evidence>
<evidence type="ECO:0000269" key="7">
    <source>
    </source>
</evidence>
<evidence type="ECO:0000269" key="8">
    <source>
    </source>
</evidence>
<evidence type="ECO:0000305" key="9"/>
<comment type="function">
    <text evidence="1 3 4 5 6 7">Component of the Mediator complex, a coactivator involved in the regulated transcription of nearly all RNA polymerase II-dependent genes. Mediator functions as a bridge to convey information from gene-specific regulatory proteins to the basal RNA polymerase II transcription machinery. Mediator is recruited to promoters by direct interactions with regulatory proteins and serves as a scaffold for the assembly of a functional preinitiation complex with RNA polymerase II and the general transcription factors (By similarity). Required for leg and eye development and macrochaete specification or differentiation. Negatively regulates sex comb development. Required for activated transcription of the MtnB and MtnD genes.</text>
</comment>
<comment type="subunit">
    <text>Component of the Cdk8 module of the Mediator complex, composed of CycC, Cdk8, kto and skd.</text>
</comment>
<comment type="interaction">
    <interactant intactId="EBI-110730">
        <id>Q7KTX8</id>
    </interactant>
    <interactant intactId="EBI-163640">
        <id>Q9VT57</id>
        <label>Cdk8</label>
    </interactant>
    <organismsDiffer>false</organismsDiffer>
    <experiments>2</experiments>
</comment>
<comment type="interaction">
    <interactant intactId="EBI-110730">
        <id>Q7KTX8</id>
    </interactant>
    <interactant intactId="EBI-195485">
        <id>P25008</id>
        <label>CycC</label>
    </interactant>
    <organismsDiffer>false</organismsDiffer>
    <experiments>2</experiments>
</comment>
<comment type="interaction">
    <interactant intactId="EBI-110730">
        <id>Q7KTX8</id>
    </interactant>
    <interactant intactId="EBI-152653">
        <id>Q9V9W8</id>
        <label>pygo</label>
    </interactant>
    <organismsDiffer>false</organismsDiffer>
    <experiments>2</experiments>
</comment>
<comment type="subcellular location">
    <subcellularLocation>
        <location evidence="3 5">Nucleus</location>
    </subcellularLocation>
</comment>
<comment type="developmental stage">
    <text evidence="3">Expressed ubiquitously throughout development.</text>
</comment>
<comment type="similarity">
    <text evidence="9">Belongs to the Mediator complex subunit 13 family.</text>
</comment>
<comment type="sequence caution" evidence="9">
    <conflict type="erroneous initiation">
        <sequence resource="EMBL-CDS" id="AAL28909"/>
    </conflict>
</comment>
<protein>
    <recommendedName>
        <fullName>Mediator of RNA polymerase II transcription subunit 13</fullName>
    </recommendedName>
    <alternativeName>
        <fullName>Mediator complex subunit 13</fullName>
    </alternativeName>
    <alternativeName>
        <fullName>Mediator complex subunit Skuld</fullName>
    </alternativeName>
    <alternativeName>
        <fullName>Protein blind spot</fullName>
    </alternativeName>
    <alternativeName>
        <fullName>Protein poils aux pattes</fullName>
    </alternativeName>
    <alternativeName>
        <fullName>dTRAP240</fullName>
    </alternativeName>
</protein>
<name>MED13_DROME</name>